<feature type="chain" id="PRO_0000185945" description="Glutathione S-transferase 6.7">
    <location>
        <begin position="1" status="less than"/>
        <end position="54" status="greater than"/>
    </location>
</feature>
<feature type="non-consecutive residues" evidence="1">
    <location>
        <begin position="37"/>
        <end position="38"/>
    </location>
</feature>
<feature type="non-terminal residue">
    <location>
        <position position="1"/>
    </location>
</feature>
<feature type="non-terminal residue">
    <location>
        <position position="54"/>
    </location>
</feature>
<reference key="1">
    <citation type="journal article" date="2000" name="Arch. Biochem. Biophys.">
        <title>Purification and characterization of glutathione transferases from the sea bass (Dicentrarchus labrax) liver.</title>
        <authorList>
            <person name="Angelucci S."/>
            <person name="Sacchetta P."/>
            <person name="Moio P."/>
            <person name="Melino S."/>
            <person name="Petruzzelli R."/>
            <person name="Gervasi P."/>
            <person name="Di Ilio C."/>
        </authorList>
    </citation>
    <scope>PROTEIN SEQUENCE</scope>
    <source>
        <tissue>Liver</tissue>
    </source>
</reference>
<keyword id="KW-0963">Cytoplasm</keyword>
<keyword id="KW-0903">Direct protein sequencing</keyword>
<keyword id="KW-1185">Reference proteome</keyword>
<keyword id="KW-0808">Transferase</keyword>
<accession>P82607</accession>
<evidence type="ECO:0000305" key="1"/>
<proteinExistence type="evidence at protein level"/>
<dbReference type="EC" id="2.5.1.18"/>
<dbReference type="Proteomes" id="UP000694389">
    <property type="component" value="Unplaced"/>
</dbReference>
<dbReference type="GO" id="GO:0005737">
    <property type="term" value="C:cytoplasm"/>
    <property type="evidence" value="ECO:0007669"/>
    <property type="project" value="UniProtKB-SubCell"/>
</dbReference>
<dbReference type="GO" id="GO:0004364">
    <property type="term" value="F:glutathione transferase activity"/>
    <property type="evidence" value="ECO:0007669"/>
    <property type="project" value="UniProtKB-EC"/>
</dbReference>
<sequence>NPRGLPAFKHGNXVLNESYAXMYLESQFGSXGXLIPDADVIYYNWKVPEGERHD</sequence>
<name>GST67_DICLA</name>
<organism>
    <name type="scientific">Dicentrarchus labrax</name>
    <name type="common">European seabass</name>
    <name type="synonym">Morone labrax</name>
    <dbReference type="NCBI Taxonomy" id="13489"/>
    <lineage>
        <taxon>Eukaryota</taxon>
        <taxon>Metazoa</taxon>
        <taxon>Chordata</taxon>
        <taxon>Craniata</taxon>
        <taxon>Vertebrata</taxon>
        <taxon>Euteleostomi</taxon>
        <taxon>Actinopterygii</taxon>
        <taxon>Neopterygii</taxon>
        <taxon>Teleostei</taxon>
        <taxon>Neoteleostei</taxon>
        <taxon>Acanthomorphata</taxon>
        <taxon>Eupercaria</taxon>
        <taxon>Moronidae</taxon>
        <taxon>Dicentrarchus</taxon>
    </lineage>
</organism>
<protein>
    <recommendedName>
        <fullName>Glutathione S-transferase 6.7</fullName>
        <shortName>GST-6.7</shortName>
        <ecNumber>2.5.1.18</ecNumber>
    </recommendedName>
    <alternativeName>
        <fullName>GST class-theta</fullName>
    </alternativeName>
</protein>
<comment type="function">
    <text>Conjugation of reduced glutathione to a wide number of exogenous and endogenous hydrophobic electrophiles.</text>
</comment>
<comment type="catalytic activity">
    <reaction>
        <text>RX + glutathione = an S-substituted glutathione + a halide anion + H(+)</text>
        <dbReference type="Rhea" id="RHEA:16437"/>
        <dbReference type="ChEBI" id="CHEBI:15378"/>
        <dbReference type="ChEBI" id="CHEBI:16042"/>
        <dbReference type="ChEBI" id="CHEBI:17792"/>
        <dbReference type="ChEBI" id="CHEBI:57925"/>
        <dbReference type="ChEBI" id="CHEBI:90779"/>
        <dbReference type="EC" id="2.5.1.18"/>
    </reaction>
</comment>
<comment type="subunit">
    <text>Homodimer.</text>
</comment>
<comment type="subcellular location">
    <subcellularLocation>
        <location>Cytoplasm</location>
    </subcellularLocation>
</comment>
<comment type="PTM">
    <text>The N-terminus is blocked.</text>
</comment>
<comment type="similarity">
    <text evidence="1">Belongs to the GST superfamily. Theta family.</text>
</comment>